<gene>
    <name type="primary">CDC21</name>
    <name type="synonym">CRT9</name>
    <name type="synonym">TMP1</name>
    <name type="ordered locus">YOR074C</name>
    <name type="ORF">YOR29-25</name>
</gene>
<reference key="1">
    <citation type="journal article" date="1987" name="J. Biol. Chem.">
        <title>Molecular characterization of the cell cycle-regulated thymidylate synthase gene of Saccharomyces cerevisiae.</title>
        <authorList>
            <person name="Taylor G.R."/>
            <person name="Lagosky P.A."/>
            <person name="Storms R.K."/>
            <person name="Haynes R.H."/>
        </authorList>
    </citation>
    <scope>NUCLEOTIDE SEQUENCE [GENOMIC DNA]</scope>
</reference>
<reference key="2">
    <citation type="journal article" date="1997" name="Yeast">
        <title>The sequence of a 54.7 kb fragment of yeast chromosome XV reveals the presence of two tRNAs and 24 new open reading frames.</title>
        <authorList>
            <person name="Valens M."/>
            <person name="Bohn C."/>
            <person name="Daignan-Fornier B."/>
            <person name="Dang V.-D."/>
            <person name="Bolotin-Fukuhara M."/>
        </authorList>
    </citation>
    <scope>NUCLEOTIDE SEQUENCE [GENOMIC DNA]</scope>
</reference>
<reference key="3">
    <citation type="journal article" date="1997" name="Nature">
        <title>The nucleotide sequence of Saccharomyces cerevisiae chromosome XV.</title>
        <authorList>
            <person name="Dujon B."/>
            <person name="Albermann K."/>
            <person name="Aldea M."/>
            <person name="Alexandraki D."/>
            <person name="Ansorge W."/>
            <person name="Arino J."/>
            <person name="Benes V."/>
            <person name="Bohn C."/>
            <person name="Bolotin-Fukuhara M."/>
            <person name="Bordonne R."/>
            <person name="Boyer J."/>
            <person name="Camasses A."/>
            <person name="Casamayor A."/>
            <person name="Casas C."/>
            <person name="Cheret G."/>
            <person name="Cziepluch C."/>
            <person name="Daignan-Fornier B."/>
            <person name="Dang V.-D."/>
            <person name="de Haan M."/>
            <person name="Delius H."/>
            <person name="Durand P."/>
            <person name="Fairhead C."/>
            <person name="Feldmann H."/>
            <person name="Gaillon L."/>
            <person name="Galisson F."/>
            <person name="Gamo F.-J."/>
            <person name="Gancedo C."/>
            <person name="Goffeau A."/>
            <person name="Goulding S.E."/>
            <person name="Grivell L.A."/>
            <person name="Habbig B."/>
            <person name="Hand N.J."/>
            <person name="Hani J."/>
            <person name="Hattenhorst U."/>
            <person name="Hebling U."/>
            <person name="Hernando Y."/>
            <person name="Herrero E."/>
            <person name="Heumann K."/>
            <person name="Hiesel R."/>
            <person name="Hilger F."/>
            <person name="Hofmann B."/>
            <person name="Hollenberg C.P."/>
            <person name="Hughes B."/>
            <person name="Jauniaux J.-C."/>
            <person name="Kalogeropoulos A."/>
            <person name="Katsoulou C."/>
            <person name="Kordes E."/>
            <person name="Lafuente M.J."/>
            <person name="Landt O."/>
            <person name="Louis E.J."/>
            <person name="Maarse A.C."/>
            <person name="Madania A."/>
            <person name="Mannhaupt G."/>
            <person name="Marck C."/>
            <person name="Martin R.P."/>
            <person name="Mewes H.-W."/>
            <person name="Michaux G."/>
            <person name="Paces V."/>
            <person name="Parle-McDermott A.G."/>
            <person name="Pearson B.M."/>
            <person name="Perrin A."/>
            <person name="Pettersson B."/>
            <person name="Poch O."/>
            <person name="Pohl T.M."/>
            <person name="Poirey R."/>
            <person name="Portetelle D."/>
            <person name="Pujol A."/>
            <person name="Purnelle B."/>
            <person name="Ramezani Rad M."/>
            <person name="Rechmann S."/>
            <person name="Schwager C."/>
            <person name="Schweizer M."/>
            <person name="Sor F."/>
            <person name="Sterky F."/>
            <person name="Tarassov I.A."/>
            <person name="Teodoru C."/>
            <person name="Tettelin H."/>
            <person name="Thierry A."/>
            <person name="Tobiasch E."/>
            <person name="Tzermia M."/>
            <person name="Uhlen M."/>
            <person name="Unseld M."/>
            <person name="Valens M."/>
            <person name="Vandenbol M."/>
            <person name="Vetter I."/>
            <person name="Vlcek C."/>
            <person name="Voet M."/>
            <person name="Volckaert G."/>
            <person name="Voss H."/>
            <person name="Wambutt R."/>
            <person name="Wedler H."/>
            <person name="Wiemann S."/>
            <person name="Winsor B."/>
            <person name="Wolfe K.H."/>
            <person name="Zollner A."/>
            <person name="Zumstein E."/>
            <person name="Kleine K."/>
        </authorList>
    </citation>
    <scope>NUCLEOTIDE SEQUENCE [LARGE SCALE GENOMIC DNA]</scope>
    <source>
        <strain>ATCC 204508 / S288c</strain>
    </source>
</reference>
<reference key="4">
    <citation type="journal article" date="2014" name="G3 (Bethesda)">
        <title>The reference genome sequence of Saccharomyces cerevisiae: Then and now.</title>
        <authorList>
            <person name="Engel S.R."/>
            <person name="Dietrich F.S."/>
            <person name="Fisk D.G."/>
            <person name="Binkley G."/>
            <person name="Balakrishnan R."/>
            <person name="Costanzo M.C."/>
            <person name="Dwight S.S."/>
            <person name="Hitz B.C."/>
            <person name="Karra K."/>
            <person name="Nash R.S."/>
            <person name="Weng S."/>
            <person name="Wong E.D."/>
            <person name="Lloyd P."/>
            <person name="Skrzypek M.S."/>
            <person name="Miyasato S.R."/>
            <person name="Simison M."/>
            <person name="Cherry J.M."/>
        </authorList>
    </citation>
    <scope>GENOME REANNOTATION</scope>
    <source>
        <strain>ATCC 204508 / S288c</strain>
    </source>
</reference>
<reference key="5">
    <citation type="journal article" date="1988" name="Mol. Cell. Biol.">
        <title>Transcriptional regulation of the cell cycle-dependent thymidylate synthase gene of Saccharomyces cerevisiae.</title>
        <authorList>
            <person name="McIntosh E.M."/>
            <person name="Ord R.W."/>
            <person name="Storms R.K."/>
        </authorList>
    </citation>
    <scope>NUCLEOTIDE SEQUENCE [GENOMIC DNA] OF 1-38</scope>
</reference>
<reference key="6">
    <citation type="journal article" date="1981" name="J. Biol. Chem.">
        <title>Thymidylate synthetase from Saccharomyces cerevisiae. Purification and enzymic properties.</title>
        <authorList>
            <person name="Bisson L.F."/>
            <person name="Thorner J."/>
        </authorList>
    </citation>
    <scope>PROTEIN SEQUENCE OF 1-18</scope>
    <scope>SUBUNIT</scope>
    <scope>CATALYTIC ACTIVITY</scope>
    <scope>FUNCTION</scope>
    <scope>BIOPHYSICOCHEMICAL PROPERTIES</scope>
</reference>
<reference key="7">
    <citation type="journal article" date="1973" name="Genetics">
        <title>Genetic control of the cell division cycle in yeast: V. Genetic analysis of cdc mutants.</title>
        <authorList>
            <person name="Hartwell L.H."/>
            <person name="Mortimer R.K."/>
            <person name="Culotti J."/>
            <person name="Culotti M."/>
        </authorList>
    </citation>
    <scope>FUNCTION</scope>
</reference>
<reference key="8">
    <citation type="journal article" date="1973" name="J. Bacteriol.">
        <title>Three additional genes required for deoxyribonucleic acid synthesis in Saccharomyces cerevisiae.</title>
        <authorList>
            <person name="Hartwell L.H."/>
        </authorList>
    </citation>
    <scope>FUNCTION</scope>
</reference>
<reference key="9">
    <citation type="journal article" date="1977" name="J. Bacteriol.">
        <title>Thymidine 5'-monophosphate-requiring mutants of Saccharomyces cerevisiae are deficient in thymidylate synthetase.</title>
        <authorList>
            <person name="Bisson L."/>
            <person name="Thorner J."/>
        </authorList>
    </citation>
    <scope>FUNCTION</scope>
</reference>
<reference key="10">
    <citation type="journal article" date="1982" name="Mol. Cell. Biol.">
        <title>Isolation of the thymidylate synthetase gene (TMP1) by complementation in Saccharomyces cerevisiae.</title>
        <authorList>
            <person name="Taylor G.R."/>
            <person name="Barclay B.J."/>
            <person name="Storms R.K."/>
            <person name="Friesen J.D."/>
            <person name="Haynes R.H."/>
        </authorList>
    </citation>
    <scope>FUNCTION</scope>
    <scope>ACTIVITY REGULATION</scope>
</reference>
<reference key="11">
    <citation type="journal article" date="1986" name="Exp. Cell Res.">
        <title>The expression in meiosis of genes which are transcribed periodically in the mitotic cell cycle of budding yeast.</title>
        <authorList>
            <person name="Johnston L.H."/>
            <person name="Johnson A.L."/>
            <person name="Barker D.G."/>
        </authorList>
    </citation>
    <scope>INDUCTION</scope>
</reference>
<reference key="12">
    <citation type="journal article" date="1986" name="Mol. Gen. Genet.">
        <title>Transcription of genes encoding enzymes involved in DNA synthesis during the cell cycle of Saccharomyces cerevisiae.</title>
        <authorList>
            <person name="McIntosh E.M."/>
            <person name="Gadsden M.H."/>
            <person name="Haynes R.H."/>
        </authorList>
    </citation>
    <scope>INDUCTION</scope>
</reference>
<reference key="13">
    <citation type="journal article" date="1992" name="J. Cell Sci. Suppl.">
        <title>SWI6 is a regulatory subunit of two different cell cycle START-dependent transcription factors in Saccharomyces cerevisiae.</title>
        <authorList>
            <person name="Moll T."/>
            <person name="Dirick L."/>
            <person name="Auer H."/>
            <person name="Bonkovsky J."/>
            <person name="Nasmyth K."/>
        </authorList>
    </citation>
    <scope>INDUCTION</scope>
</reference>
<reference key="14">
    <citation type="journal article" date="1992" name="Nature">
        <title>A central role for SWI6 in modulating cell cycle Start-specific transcription in yeast.</title>
        <authorList>
            <person name="Dirick L."/>
            <person name="Moll T."/>
            <person name="Auer H."/>
            <person name="Nasmyth K."/>
        </authorList>
    </citation>
    <scope>INDUCTION</scope>
</reference>
<reference key="15">
    <citation type="journal article" date="1992" name="Proc. Natl. Acad. Sci. U.S.A.">
        <title>Regulation of the yeast DNA replication genes through the Mlu I cell cycle box is dependent on SWI6.</title>
        <authorList>
            <person name="Verma R."/>
            <person name="Smiley J."/>
            <person name="Andrews B."/>
            <person name="Campbell J.L."/>
        </authorList>
    </citation>
    <scope>INDUCTION</scope>
</reference>
<reference key="16">
    <citation type="journal article" date="1994" name="J. Biol. Chem.">
        <title>Thymidylate synthase is localized to the nuclear periphery in the yeast Saccharomyces cerevisiae.</title>
        <authorList>
            <person name="Poon P.P."/>
            <person name="Storms R.K."/>
        </authorList>
    </citation>
    <scope>SUBCELLULAR LOCATION</scope>
</reference>
<keyword id="KW-0903">Direct protein sequencing</keyword>
<keyword id="KW-0489">Methyltransferase</keyword>
<keyword id="KW-0545">Nucleotide biosynthesis</keyword>
<keyword id="KW-0539">Nucleus</keyword>
<keyword id="KW-1185">Reference proteome</keyword>
<keyword id="KW-0808">Transferase</keyword>
<accession>P06785</accession>
<accession>D6W2D7</accession>
<accession>Q12694</accession>
<feature type="chain" id="PRO_0000140912" description="Thymidylate synthase">
    <location>
        <begin position="1"/>
        <end position="304"/>
    </location>
</feature>
<feature type="active site" description="Nucleophile" evidence="1">
    <location>
        <position position="177"/>
    </location>
</feature>
<feature type="binding site" description="in other chain" evidence="1">
    <location>
        <position position="30"/>
    </location>
    <ligand>
        <name>dUMP</name>
        <dbReference type="ChEBI" id="CHEBI:246422"/>
        <note>ligand shared between dimeric partners</note>
    </ligand>
</feature>
<feature type="binding site" evidence="1">
    <location>
        <begin position="157"/>
        <end position="158"/>
    </location>
    <ligand>
        <name>dUMP</name>
        <dbReference type="ChEBI" id="CHEBI:246422"/>
        <note>ligand shared between dimeric partners</note>
    </ligand>
</feature>
<feature type="binding site" description="in other chain" evidence="1">
    <location>
        <begin position="206"/>
        <end position="209"/>
    </location>
    <ligand>
        <name>dUMP</name>
        <dbReference type="ChEBI" id="CHEBI:246422"/>
        <note>ligand shared between dimeric partners</note>
    </ligand>
</feature>
<feature type="binding site" evidence="1">
    <location>
        <position position="209"/>
    </location>
    <ligand>
        <name>(6R)-5,10-methylene-5,6,7,8-tetrahydrofolate</name>
        <dbReference type="ChEBI" id="CHEBI:15636"/>
    </ligand>
</feature>
<feature type="binding site" description="in other chain" evidence="1">
    <location>
        <position position="217"/>
    </location>
    <ligand>
        <name>dUMP</name>
        <dbReference type="ChEBI" id="CHEBI:246422"/>
        <note>ligand shared between dimeric partners</note>
    </ligand>
</feature>
<feature type="binding site" description="in other chain" evidence="1">
    <location>
        <begin position="247"/>
        <end position="249"/>
    </location>
    <ligand>
        <name>dUMP</name>
        <dbReference type="ChEBI" id="CHEBI:246422"/>
        <note>ligand shared between dimeric partners</note>
    </ligand>
</feature>
<feature type="sequence conflict" description="In Ref. 3; CAA99267." evidence="13" ref="3">
    <location>
        <begin position="34"/>
        <end position="78"/>
    </location>
</feature>
<protein>
    <recommendedName>
        <fullName>Thymidylate synthase</fullName>
        <shortName>TS</shortName>
        <shortName>TSase</shortName>
        <ecNumber>2.1.1.45</ecNumber>
    </recommendedName>
    <alternativeName>
        <fullName>Cell division cycle protein 21</fullName>
    </alternativeName>
    <alternativeName>
        <fullName>Constitutive RNR3 transcription protein 9</fullName>
    </alternativeName>
</protein>
<dbReference type="EC" id="2.1.1.45"/>
<dbReference type="EMBL" id="J02706">
    <property type="protein sequence ID" value="AAA60940.1"/>
    <property type="molecule type" value="Genomic_DNA"/>
</dbReference>
<dbReference type="EMBL" id="Z70678">
    <property type="protein sequence ID" value="CAA94559.1"/>
    <property type="molecule type" value="Genomic_DNA"/>
</dbReference>
<dbReference type="EMBL" id="Z74982">
    <property type="protein sequence ID" value="CAA99267.1"/>
    <property type="molecule type" value="Genomic_DNA"/>
</dbReference>
<dbReference type="EMBL" id="M29100">
    <property type="protein sequence ID" value="AAA35159.1"/>
    <property type="molecule type" value="Genomic_DNA"/>
</dbReference>
<dbReference type="EMBL" id="BK006948">
    <property type="protein sequence ID" value="DAA10853.1"/>
    <property type="molecule type" value="Genomic_DNA"/>
</dbReference>
<dbReference type="PIR" id="S66957">
    <property type="entry name" value="YXBYT"/>
</dbReference>
<dbReference type="RefSeq" id="NP_014717.2">
    <property type="nucleotide sequence ID" value="NM_001183493.1"/>
</dbReference>
<dbReference type="SMR" id="P06785"/>
<dbReference type="BioGRID" id="34473">
    <property type="interactions" value="433"/>
</dbReference>
<dbReference type="DIP" id="DIP-2786N"/>
<dbReference type="FunCoup" id="P06785">
    <property type="interactions" value="739"/>
</dbReference>
<dbReference type="IntAct" id="P06785">
    <property type="interactions" value="15"/>
</dbReference>
<dbReference type="MINT" id="P06785"/>
<dbReference type="STRING" id="4932.YOR074C"/>
<dbReference type="iPTMnet" id="P06785"/>
<dbReference type="PaxDb" id="4932-YOR074C"/>
<dbReference type="PeptideAtlas" id="P06785"/>
<dbReference type="EnsemblFungi" id="YOR074C_mRNA">
    <property type="protein sequence ID" value="YOR074C"/>
    <property type="gene ID" value="YOR074C"/>
</dbReference>
<dbReference type="GeneID" id="854241"/>
<dbReference type="KEGG" id="sce:YOR074C"/>
<dbReference type="AGR" id="SGD:S000005600"/>
<dbReference type="SGD" id="S000005600">
    <property type="gene designation" value="CDC21"/>
</dbReference>
<dbReference type="VEuPathDB" id="FungiDB:YOR074C"/>
<dbReference type="eggNOG" id="KOG0673">
    <property type="taxonomic scope" value="Eukaryota"/>
</dbReference>
<dbReference type="GeneTree" id="ENSGT00390000014786"/>
<dbReference type="HOGENOM" id="CLU_021669_0_2_1"/>
<dbReference type="InParanoid" id="P06785"/>
<dbReference type="OMA" id="AYGRFWR"/>
<dbReference type="OrthoDB" id="766at2759"/>
<dbReference type="BioCyc" id="YEAST:YOR074C-MONOMER"/>
<dbReference type="Reactome" id="R-SCE-499943">
    <property type="pathway name" value="Interconversion of nucleotide di- and triphosphates"/>
</dbReference>
<dbReference type="UniPathway" id="UPA00575"/>
<dbReference type="BioGRID-ORCS" id="854241">
    <property type="hits" value="1 hit in 10 CRISPR screens"/>
</dbReference>
<dbReference type="PRO" id="PR:P06785"/>
<dbReference type="Proteomes" id="UP000002311">
    <property type="component" value="Chromosome XV"/>
</dbReference>
<dbReference type="RNAct" id="P06785">
    <property type="molecule type" value="protein"/>
</dbReference>
<dbReference type="GO" id="GO:0005829">
    <property type="term" value="C:cytosol"/>
    <property type="evidence" value="ECO:0000318"/>
    <property type="project" value="GO_Central"/>
</dbReference>
<dbReference type="GO" id="GO:0005739">
    <property type="term" value="C:mitochondrion"/>
    <property type="evidence" value="ECO:0000318"/>
    <property type="project" value="GO_Central"/>
</dbReference>
<dbReference type="GO" id="GO:0034399">
    <property type="term" value="C:nuclear periphery"/>
    <property type="evidence" value="ECO:0000314"/>
    <property type="project" value="SGD"/>
</dbReference>
<dbReference type="GO" id="GO:0004799">
    <property type="term" value="F:thymidylate synthase activity"/>
    <property type="evidence" value="ECO:0000314"/>
    <property type="project" value="SGD"/>
</dbReference>
<dbReference type="GO" id="GO:0006231">
    <property type="term" value="P:dTMP biosynthetic process"/>
    <property type="evidence" value="ECO:0000315"/>
    <property type="project" value="SGD"/>
</dbReference>
<dbReference type="GO" id="GO:0006235">
    <property type="term" value="P:dTTP biosynthetic process"/>
    <property type="evidence" value="ECO:0007669"/>
    <property type="project" value="UniProtKB-UniPathway"/>
</dbReference>
<dbReference type="GO" id="GO:0032259">
    <property type="term" value="P:methylation"/>
    <property type="evidence" value="ECO:0007669"/>
    <property type="project" value="UniProtKB-KW"/>
</dbReference>
<dbReference type="CDD" id="cd00351">
    <property type="entry name" value="TS_Pyrimidine_HMase"/>
    <property type="match status" value="1"/>
</dbReference>
<dbReference type="FunFam" id="3.30.572.10:FF:000005">
    <property type="entry name" value="Thymidylate synthase"/>
    <property type="match status" value="1"/>
</dbReference>
<dbReference type="Gene3D" id="3.30.572.10">
    <property type="entry name" value="Thymidylate synthase/dCMP hydroxymethylase domain"/>
    <property type="match status" value="1"/>
</dbReference>
<dbReference type="HAMAP" id="MF_00008">
    <property type="entry name" value="Thymidy_synth_bact"/>
    <property type="match status" value="1"/>
</dbReference>
<dbReference type="InterPro" id="IPR045097">
    <property type="entry name" value="Thymidate_synth/dCMP_Mease"/>
</dbReference>
<dbReference type="InterPro" id="IPR023451">
    <property type="entry name" value="Thymidate_synth/dCMP_Mease_dom"/>
</dbReference>
<dbReference type="InterPro" id="IPR036926">
    <property type="entry name" value="Thymidate_synth/dCMP_Mease_sf"/>
</dbReference>
<dbReference type="InterPro" id="IPR000398">
    <property type="entry name" value="Thymidylate_synthase"/>
</dbReference>
<dbReference type="InterPro" id="IPR020940">
    <property type="entry name" value="Thymidylate_synthase_AS"/>
</dbReference>
<dbReference type="NCBIfam" id="NF002497">
    <property type="entry name" value="PRK01827.1-3"/>
    <property type="match status" value="1"/>
</dbReference>
<dbReference type="NCBIfam" id="TIGR03284">
    <property type="entry name" value="thym_sym"/>
    <property type="match status" value="1"/>
</dbReference>
<dbReference type="PANTHER" id="PTHR11548:SF2">
    <property type="entry name" value="THYMIDYLATE SYNTHASE"/>
    <property type="match status" value="1"/>
</dbReference>
<dbReference type="PANTHER" id="PTHR11548">
    <property type="entry name" value="THYMIDYLATE SYNTHASE 1"/>
    <property type="match status" value="1"/>
</dbReference>
<dbReference type="Pfam" id="PF00303">
    <property type="entry name" value="Thymidylat_synt"/>
    <property type="match status" value="1"/>
</dbReference>
<dbReference type="PRINTS" id="PR00108">
    <property type="entry name" value="THYMDSNTHASE"/>
</dbReference>
<dbReference type="SUPFAM" id="SSF55831">
    <property type="entry name" value="Thymidylate synthase/dCMP hydroxymethylase"/>
    <property type="match status" value="1"/>
</dbReference>
<dbReference type="PROSITE" id="PS00091">
    <property type="entry name" value="THYMIDYLATE_SYNTHASE"/>
    <property type="match status" value="1"/>
</dbReference>
<organism>
    <name type="scientific">Saccharomyces cerevisiae (strain ATCC 204508 / S288c)</name>
    <name type="common">Baker's yeast</name>
    <dbReference type="NCBI Taxonomy" id="559292"/>
    <lineage>
        <taxon>Eukaryota</taxon>
        <taxon>Fungi</taxon>
        <taxon>Dikarya</taxon>
        <taxon>Ascomycota</taxon>
        <taxon>Saccharomycotina</taxon>
        <taxon>Saccharomycetes</taxon>
        <taxon>Saccharomycetales</taxon>
        <taxon>Saccharomycetaceae</taxon>
        <taxon>Saccharomyces</taxon>
    </lineage>
</organism>
<sequence length="304" mass="35047">MTMDGKNKEEEQYLDLCKRIIDEGEFRPDRTGTGTLSLFAPPQLRFSLRDDTFPLLTTKKVFTRGIILELLWFLAGDTDANLLSEQGVKIWDGNGSREYLDKMGFKDRKVGDLGPVYGFQWRHFGAKYKTCDDDYTGQGIDQLKQVIHKLKTNPYDRRIIMSAWNPADFDKMALPPCHIFSQFYVSFPKEGEGSGKPRLSCLLYQRSCDMGLGVPFNIASYALLTRMIAKVVDMEPGEFIHTLGDAHVYKDHIDALKEQITRNPRPFPKLKIKRDVKDIDDFKLTDFEIEDYNPHPRIQMKMSV</sequence>
<comment type="function">
    <text evidence="5 7 9 10 11">Thymidylate synthase required for de novo biosynthesis of pyrimidine deoxyribonucleotides. Required for both nuclear and mitochondrial DNA synthesis.</text>
</comment>
<comment type="catalytic activity">
    <reaction evidence="11">
        <text>dUMP + (6R)-5,10-methylene-5,6,7,8-tetrahydrofolate = 7,8-dihydrofolate + dTMP</text>
        <dbReference type="Rhea" id="RHEA:12104"/>
        <dbReference type="ChEBI" id="CHEBI:15636"/>
        <dbReference type="ChEBI" id="CHEBI:57451"/>
        <dbReference type="ChEBI" id="CHEBI:63528"/>
        <dbReference type="ChEBI" id="CHEBI:246422"/>
        <dbReference type="EC" id="2.1.1.45"/>
    </reaction>
</comment>
<comment type="activity regulation">
    <text evidence="10">Inhibited by 5-fluoro-2'-deoxyuridine 5'-monophosphate (FdUMP).</text>
</comment>
<comment type="biophysicochemical properties">
    <kinetics>
        <KM evidence="11">5 uM for dUMP</KM>
        <KM evidence="11">70 uM for 5,10-methylene-tetrahydropteroylglutamate</KM>
    </kinetics>
    <phDependence>
        <text evidence="11">Optimum pH is 6.8-7.2.</text>
    </phDependence>
</comment>
<comment type="pathway">
    <text>Pyrimidine metabolism; dTTP biosynthesis.</text>
</comment>
<comment type="subunit">
    <text evidence="11">Homodimer.</text>
</comment>
<comment type="subcellular location">
    <subcellularLocation>
        <location evidence="12">Nucleus</location>
    </subcellularLocation>
    <text>Localizes to the nuclear periphery.</text>
</comment>
<comment type="induction">
    <text evidence="2 3 4 6 8">Transcribed in a periodic manner during the cell cycle with maximal mRNA levels occurring just prior to the onset of DNA replication. The promoter contains 8-base-pair motifs (ACGCGTNA) called the MluI cell-cycle boxes (MCBs), which mediate transcription regulation by SWI6.</text>
</comment>
<comment type="similarity">
    <text evidence="13">Belongs to the thymidylate synthase family.</text>
</comment>
<name>TYSY_YEAST</name>
<evidence type="ECO:0000250" key="1">
    <source>
        <dbReference type="UniProtKB" id="P0A884"/>
    </source>
</evidence>
<evidence type="ECO:0000269" key="2">
    <source>
    </source>
</evidence>
<evidence type="ECO:0000269" key="3">
    <source>
    </source>
</evidence>
<evidence type="ECO:0000269" key="4">
    <source>
    </source>
</evidence>
<evidence type="ECO:0000269" key="5">
    <source>
    </source>
</evidence>
<evidence type="ECO:0000269" key="6">
    <source>
    </source>
</evidence>
<evidence type="ECO:0000269" key="7">
    <source>
    </source>
</evidence>
<evidence type="ECO:0000269" key="8">
    <source>
    </source>
</evidence>
<evidence type="ECO:0000269" key="9">
    <source>
    </source>
</evidence>
<evidence type="ECO:0000269" key="10">
    <source>
    </source>
</evidence>
<evidence type="ECO:0000269" key="11">
    <source>
    </source>
</evidence>
<evidence type="ECO:0000269" key="12">
    <source>
    </source>
</evidence>
<evidence type="ECO:0000305" key="13"/>
<proteinExistence type="evidence at protein level"/>